<dbReference type="EC" id="3.1.3.10"/>
<dbReference type="EMBL" id="AE006468">
    <property type="protein sequence ID" value="AAL20049.1"/>
    <property type="molecule type" value="Genomic_DNA"/>
</dbReference>
<dbReference type="EMBL" id="U75949">
    <property type="protein sequence ID" value="AAC45604.1"/>
    <property type="molecule type" value="Genomic_DNA"/>
</dbReference>
<dbReference type="RefSeq" id="NP_460090.1">
    <property type="nucleotide sequence ID" value="NC_003197.2"/>
</dbReference>
<dbReference type="RefSeq" id="WP_000749201.1">
    <property type="nucleotide sequence ID" value="NC_003197.2"/>
</dbReference>
<dbReference type="SMR" id="O33921"/>
<dbReference type="STRING" id="99287.STM1117"/>
<dbReference type="PaxDb" id="99287-STM1117"/>
<dbReference type="GeneID" id="1252635"/>
<dbReference type="KEGG" id="stm:STM1117"/>
<dbReference type="PATRIC" id="fig|99287.12.peg.1182"/>
<dbReference type="HOGENOM" id="CLU_030561_2_1_6"/>
<dbReference type="OMA" id="EYLYQST"/>
<dbReference type="PhylomeDB" id="O33921"/>
<dbReference type="BioCyc" id="SENT99287:STM1117-MONOMER"/>
<dbReference type="Proteomes" id="UP000001014">
    <property type="component" value="Chromosome"/>
</dbReference>
<dbReference type="GO" id="GO:0030288">
    <property type="term" value="C:outer membrane-bounded periplasmic space"/>
    <property type="evidence" value="ECO:0000318"/>
    <property type="project" value="GO_Central"/>
</dbReference>
<dbReference type="GO" id="GO:0008877">
    <property type="term" value="F:glucose-1-phosphatase activity"/>
    <property type="evidence" value="ECO:0007669"/>
    <property type="project" value="UniProtKB-EC"/>
</dbReference>
<dbReference type="GO" id="GO:0050308">
    <property type="term" value="F:sugar-phosphatase activity"/>
    <property type="evidence" value="ECO:0000318"/>
    <property type="project" value="GO_Central"/>
</dbReference>
<dbReference type="CDD" id="cd07061">
    <property type="entry name" value="HP_HAP_like"/>
    <property type="match status" value="1"/>
</dbReference>
<dbReference type="Gene3D" id="3.40.50.1240">
    <property type="entry name" value="Phosphoglycerate mutase-like"/>
    <property type="match status" value="2"/>
</dbReference>
<dbReference type="InterPro" id="IPR033379">
    <property type="entry name" value="Acid_Pase_AS"/>
</dbReference>
<dbReference type="InterPro" id="IPR000560">
    <property type="entry name" value="His_Pase_clade-2"/>
</dbReference>
<dbReference type="InterPro" id="IPR029033">
    <property type="entry name" value="His_PPase_superfam"/>
</dbReference>
<dbReference type="InterPro" id="IPR050645">
    <property type="entry name" value="Histidine_acid_phosphatase"/>
</dbReference>
<dbReference type="NCBIfam" id="NF007553">
    <property type="entry name" value="PRK10173.1"/>
    <property type="match status" value="1"/>
</dbReference>
<dbReference type="PANTHER" id="PTHR11567">
    <property type="entry name" value="ACID PHOSPHATASE-RELATED"/>
    <property type="match status" value="1"/>
</dbReference>
<dbReference type="PANTHER" id="PTHR11567:SF135">
    <property type="entry name" value="GLUCOSE-1-PHOSPHATASE"/>
    <property type="match status" value="1"/>
</dbReference>
<dbReference type="Pfam" id="PF00328">
    <property type="entry name" value="His_Phos_2"/>
    <property type="match status" value="1"/>
</dbReference>
<dbReference type="SUPFAM" id="SSF53254">
    <property type="entry name" value="Phosphoglycerate mutase-like"/>
    <property type="match status" value="1"/>
</dbReference>
<dbReference type="PROSITE" id="PS00616">
    <property type="entry name" value="HIS_ACID_PHOSPHAT_1"/>
    <property type="match status" value="1"/>
</dbReference>
<dbReference type="PROSITE" id="PS00778">
    <property type="entry name" value="HIS_ACID_PHOSPHAT_2"/>
    <property type="match status" value="1"/>
</dbReference>
<proteinExistence type="inferred from homology"/>
<comment type="catalytic activity">
    <reaction>
        <text>alpha-D-glucose 1-phosphate + H2O = D-glucose + phosphate</text>
        <dbReference type="Rhea" id="RHEA:19933"/>
        <dbReference type="ChEBI" id="CHEBI:4167"/>
        <dbReference type="ChEBI" id="CHEBI:15377"/>
        <dbReference type="ChEBI" id="CHEBI:43474"/>
        <dbReference type="ChEBI" id="CHEBI:58601"/>
        <dbReference type="EC" id="3.1.3.10"/>
    </reaction>
</comment>
<comment type="subunit">
    <text evidence="1">Homodimer.</text>
</comment>
<comment type="subcellular location">
    <subcellularLocation>
        <location>Periplasm</location>
    </subcellularLocation>
</comment>
<comment type="similarity">
    <text evidence="2">Belongs to the histidine acid phosphatase family.</text>
</comment>
<reference key="1">
    <citation type="journal article" date="2001" name="Nature">
        <title>Complete genome sequence of Salmonella enterica serovar Typhimurium LT2.</title>
        <authorList>
            <person name="McClelland M."/>
            <person name="Sanderson K.E."/>
            <person name="Spieth J."/>
            <person name="Clifton S.W."/>
            <person name="Latreille P."/>
            <person name="Courtney L."/>
            <person name="Porwollik S."/>
            <person name="Ali J."/>
            <person name="Dante M."/>
            <person name="Du F."/>
            <person name="Hou S."/>
            <person name="Layman D."/>
            <person name="Leonard S."/>
            <person name="Nguyen C."/>
            <person name="Scott K."/>
            <person name="Holmes A."/>
            <person name="Grewal N."/>
            <person name="Mulvaney E."/>
            <person name="Ryan E."/>
            <person name="Sun H."/>
            <person name="Florea L."/>
            <person name="Miller W."/>
            <person name="Stoneking T."/>
            <person name="Nhan M."/>
            <person name="Waterston R."/>
            <person name="Wilson R.K."/>
        </authorList>
    </citation>
    <scope>NUCLEOTIDE SEQUENCE [LARGE SCALE GENOMIC DNA]</scope>
    <source>
        <strain>LT2 / SGSC1412 / ATCC 700720</strain>
    </source>
</reference>
<reference key="2">
    <citation type="journal article" date="1997" name="J. Bacteriol.">
        <title>A Salmonella typhimurium genetic locus which confers copper tolerance on copper-sensitive mutants of Escherichia coli.</title>
        <authorList>
            <person name="Gupta S.D."/>
            <person name="Wu H.C."/>
            <person name="Rick P.D."/>
        </authorList>
    </citation>
    <scope>NUCLEOTIDE SEQUENCE [GENOMIC DNA] OF 1-249</scope>
    <source>
        <strain>TN1379</strain>
    </source>
</reference>
<gene>
    <name type="primary">agp</name>
    <name type="ordered locus">STM1117</name>
</gene>
<organism>
    <name type="scientific">Salmonella typhimurium (strain LT2 / SGSC1412 / ATCC 700720)</name>
    <dbReference type="NCBI Taxonomy" id="99287"/>
    <lineage>
        <taxon>Bacteria</taxon>
        <taxon>Pseudomonadati</taxon>
        <taxon>Pseudomonadota</taxon>
        <taxon>Gammaproteobacteria</taxon>
        <taxon>Enterobacterales</taxon>
        <taxon>Enterobacteriaceae</taxon>
        <taxon>Salmonella</taxon>
    </lineage>
</organism>
<feature type="signal peptide" evidence="1">
    <location>
        <begin position="1"/>
        <end position="22"/>
    </location>
</feature>
<feature type="chain" id="PRO_0000023949" description="Glucose-1-phosphatase">
    <location>
        <begin position="23"/>
        <end position="413"/>
    </location>
</feature>
<feature type="active site" description="Nucleophile" evidence="1">
    <location>
        <position position="40"/>
    </location>
</feature>
<feature type="active site" description="Proton donor" evidence="1">
    <location>
        <position position="312"/>
    </location>
</feature>
<feature type="binding site" evidence="1">
    <location>
        <position position="39"/>
    </location>
    <ligand>
        <name>substrate</name>
    </ligand>
</feature>
<feature type="binding site" evidence="1">
    <location>
        <position position="43"/>
    </location>
    <ligand>
        <name>substrate</name>
    </ligand>
</feature>
<feature type="binding site" evidence="1">
    <location>
        <position position="116"/>
    </location>
    <ligand>
        <name>substrate</name>
    </ligand>
</feature>
<feature type="binding site" evidence="1">
    <location>
        <position position="218"/>
    </location>
    <ligand>
        <name>substrate</name>
    </ligand>
</feature>
<feature type="sequence conflict" description="In Ref. 2; AAC45604." evidence="2" ref="2">
    <original>T</original>
    <variation>P</variation>
    <location>
        <position position="57"/>
    </location>
</feature>
<feature type="sequence conflict" description="In Ref. 2; AAC45604." evidence="2" ref="2">
    <original>AWPA</original>
    <variation>TCPP</variation>
    <location>
        <begin position="60"/>
        <end position="63"/>
    </location>
</feature>
<feature type="sequence conflict" description="In Ref. 2; AAC45604." evidence="2" ref="2">
    <original>K</original>
    <variation>T</variation>
    <location>
        <position position="74"/>
    </location>
</feature>
<protein>
    <recommendedName>
        <fullName>Glucose-1-phosphatase</fullName>
        <shortName>G1Pase</shortName>
        <ecNumber>3.1.3.10</ecNumber>
    </recommendedName>
</protein>
<accession>O33921</accession>
<keyword id="KW-0378">Hydrolase</keyword>
<keyword id="KW-0574">Periplasm</keyword>
<keyword id="KW-1185">Reference proteome</keyword>
<keyword id="KW-0732">Signal</keyword>
<name>AGP_SALTY</name>
<sequence>MKKSLLAVAVAGAVLLSSAVQAQTTPEGYQLQQVLMMSRHNLRAPLANNGSVLAQSTPNAWPAWDVPGGQLTTKGGVLEVYMGHYTREWLVAQGLIPSGECPAPDTVYAYANSLQRTVATAQFFITGAFPGCDIPVHHQEKMGTMDPTFNPVITDDSAAFRQQAVQAMEKARSQLHLDESYKLLEQITHYQDSPSCKEKHQCSLIDAKDTFSANYQQEPGVQGPLKVGNSLVDAFTLQYYEGFPMDQVAWGGIHTDRQWKVLSKLKNGYQDSLFTSPTVARNVAAPLVKYIDKVLVADRVSAPKVTVLVGHDSNIASLLTALDFKPYQLHDQYERTPIGGQLVFQRWHDGNANRDLMKIEYVYQSARQLRNAEALTLKSPAQRVTLELKGCPVDANGFCPLDKFDNVMNTAAK</sequence>
<evidence type="ECO:0000250" key="1"/>
<evidence type="ECO:0000305" key="2"/>